<protein>
    <recommendedName>
        <fullName>Ferredoxin-like protein</fullName>
    </recommendedName>
</protein>
<dbReference type="EMBL" id="X13144">
    <property type="protein sequence ID" value="CAA31540.1"/>
    <property type="molecule type" value="Genomic_DNA"/>
</dbReference>
<dbReference type="EMBL" id="AH010242">
    <property type="protein sequence ID" value="AAG60759.1"/>
    <property type="molecule type" value="Genomic_DNA"/>
</dbReference>
<dbReference type="EMBL" id="BA000040">
    <property type="protein sequence ID" value="BAC47040.1"/>
    <property type="molecule type" value="Genomic_DNA"/>
</dbReference>
<dbReference type="PIR" id="S04185">
    <property type="entry name" value="S04185"/>
</dbReference>
<dbReference type="RefSeq" id="NP_768415.1">
    <property type="nucleotide sequence ID" value="NC_004463.1"/>
</dbReference>
<dbReference type="RefSeq" id="WP_011084584.1">
    <property type="nucleotide sequence ID" value="NZ_CP011360.1"/>
</dbReference>
<dbReference type="SMR" id="P10326"/>
<dbReference type="FunCoup" id="P10326">
    <property type="interactions" value="34"/>
</dbReference>
<dbReference type="STRING" id="224911.AAV28_05800"/>
<dbReference type="EnsemblBacteria" id="BAC47040">
    <property type="protein sequence ID" value="BAC47040"/>
    <property type="gene ID" value="BAC47040"/>
</dbReference>
<dbReference type="KEGG" id="bja:bsr1775"/>
<dbReference type="PATRIC" id="fig|224911.44.peg.1243"/>
<dbReference type="eggNOG" id="COG2440">
    <property type="taxonomic scope" value="Bacteria"/>
</dbReference>
<dbReference type="HOGENOM" id="CLU_163428_0_0_5"/>
<dbReference type="InParanoid" id="P10326"/>
<dbReference type="OrthoDB" id="9800260at2"/>
<dbReference type="PhylomeDB" id="P10326"/>
<dbReference type="Proteomes" id="UP000002526">
    <property type="component" value="Chromosome"/>
</dbReference>
<dbReference type="GO" id="GO:0005506">
    <property type="term" value="F:iron ion binding"/>
    <property type="evidence" value="ECO:0007669"/>
    <property type="project" value="InterPro"/>
</dbReference>
<dbReference type="GO" id="GO:0051536">
    <property type="term" value="F:iron-sulfur cluster binding"/>
    <property type="evidence" value="ECO:0007669"/>
    <property type="project" value="UniProtKB-KW"/>
</dbReference>
<dbReference type="GO" id="GO:0009399">
    <property type="term" value="P:nitrogen fixation"/>
    <property type="evidence" value="ECO:0007669"/>
    <property type="project" value="UniProtKB-KW"/>
</dbReference>
<dbReference type="Gene3D" id="3.30.70.20">
    <property type="match status" value="1"/>
</dbReference>
<dbReference type="InterPro" id="IPR017896">
    <property type="entry name" value="4Fe4S_Fe-S-bd"/>
</dbReference>
<dbReference type="InterPro" id="IPR007859">
    <property type="entry name" value="ETF-QO/FixX_C"/>
</dbReference>
<dbReference type="InterPro" id="IPR012206">
    <property type="entry name" value="Fd_FixX"/>
</dbReference>
<dbReference type="PANTHER" id="PTHR43082">
    <property type="entry name" value="FERREDOXIN-LIKE"/>
    <property type="match status" value="1"/>
</dbReference>
<dbReference type="PANTHER" id="PTHR43082:SF3">
    <property type="entry name" value="FERREDOXIN-LIKE PROTEIN YDIT"/>
    <property type="match status" value="1"/>
</dbReference>
<dbReference type="Pfam" id="PF05187">
    <property type="entry name" value="Fer4_ETF_QO"/>
    <property type="match status" value="1"/>
</dbReference>
<dbReference type="PIRSF" id="PIRSF036548">
    <property type="entry name" value="Fdx_FixX"/>
    <property type="match status" value="1"/>
</dbReference>
<dbReference type="SUPFAM" id="SSF54862">
    <property type="entry name" value="4Fe-4S ferredoxins"/>
    <property type="match status" value="1"/>
</dbReference>
<dbReference type="PROSITE" id="PS51379">
    <property type="entry name" value="4FE4S_FER_2"/>
    <property type="match status" value="1"/>
</dbReference>
<sequence>MNVEPSVRVEDKLYYNRYLVDAGHPHVRVRAHKTPSPQLLTLLKACPARCYELNDNGQVEVTVDGCIECGTCRVIAEPTGDIEWSHPRGGYGVLFKFG</sequence>
<feature type="chain" id="PRO_0000159206" description="Ferredoxin-like protein">
    <location>
        <begin position="1"/>
        <end position="98"/>
    </location>
</feature>
<feature type="domain" description="4Fe-4S ferredoxin-type" evidence="1">
    <location>
        <begin position="57"/>
        <end position="87"/>
    </location>
</feature>
<reference key="1">
    <citation type="journal article" date="1989" name="Mol. Microbiol.">
        <title>The Bradyrhizobium japonicum fixBCX operon: identification of fixX and of a 5' mRNA region affecting the level of the fixBCX transcript.</title>
        <authorList>
            <person name="Gubler M."/>
            <person name="Zurcher T."/>
            <person name="Hennecke H."/>
        </authorList>
    </citation>
    <scope>NUCLEOTIDE SEQUENCE [GENOMIC DNA]</scope>
    <source>
        <strain>USDA 110spc4</strain>
    </source>
</reference>
<reference key="2">
    <citation type="journal article" date="2001" name="J. Bacteriol.">
        <title>Potential symbiosis-specific genes uncovered by sequencing a 410-kb DNA region of the Bradyrhizobium japonicum chromosome.</title>
        <authorList>
            <person name="Goettfert M."/>
            <person name="Roethlisberger S."/>
            <person name="Kuendig C."/>
            <person name="Beck C."/>
            <person name="Marty R."/>
            <person name="Hennecke H."/>
        </authorList>
    </citation>
    <scope>NUCLEOTIDE SEQUENCE [GENOMIC DNA]</scope>
    <source>
        <strain>USDA 110spc4</strain>
    </source>
</reference>
<reference key="3">
    <citation type="journal article" date="2002" name="DNA Res.">
        <title>Complete genomic sequence of nitrogen-fixing symbiotic bacterium Bradyrhizobium japonicum USDA110.</title>
        <authorList>
            <person name="Kaneko T."/>
            <person name="Nakamura Y."/>
            <person name="Sato S."/>
            <person name="Minamisawa K."/>
            <person name="Uchiumi T."/>
            <person name="Sasamoto S."/>
            <person name="Watanabe A."/>
            <person name="Idesawa K."/>
            <person name="Iriguchi M."/>
            <person name="Kawashima K."/>
            <person name="Kohara M."/>
            <person name="Matsumoto M."/>
            <person name="Shimpo S."/>
            <person name="Tsuruoka H."/>
            <person name="Wada T."/>
            <person name="Yamada M."/>
            <person name="Tabata S."/>
        </authorList>
    </citation>
    <scope>NUCLEOTIDE SEQUENCE [LARGE SCALE GENOMIC DNA]</scope>
    <source>
        <strain>JCM 10833 / BCRC 13528 / IAM 13628 / NBRC 14792 / USDA 110</strain>
    </source>
</reference>
<evidence type="ECO:0000255" key="1">
    <source>
        <dbReference type="PROSITE-ProRule" id="PRU00711"/>
    </source>
</evidence>
<evidence type="ECO:0000305" key="2"/>
<comment type="function">
    <text>Could be a 3Fe-4S cluster-containing protein.</text>
</comment>
<comment type="similarity">
    <text evidence="2">To ferredoxins from P.putida and C.tartarivorum, ferredoxin I from A.vinelandii, ferredoxin II from D.desulfuricans.</text>
</comment>
<name>FIXX_BRADU</name>
<gene>
    <name type="primary">fixX</name>
    <name type="ordered locus">bsr1775</name>
</gene>
<keyword id="KW-0249">Electron transport</keyword>
<keyword id="KW-0408">Iron</keyword>
<keyword id="KW-0411">Iron-sulfur</keyword>
<keyword id="KW-0479">Metal-binding</keyword>
<keyword id="KW-0535">Nitrogen fixation</keyword>
<keyword id="KW-1185">Reference proteome</keyword>
<keyword id="KW-0813">Transport</keyword>
<accession>P10326</accession>
<proteinExistence type="predicted"/>
<organism>
    <name type="scientific">Bradyrhizobium diazoefficiens (strain JCM 10833 / BCRC 13528 / IAM 13628 / NBRC 14792 / USDA 110)</name>
    <dbReference type="NCBI Taxonomy" id="224911"/>
    <lineage>
        <taxon>Bacteria</taxon>
        <taxon>Pseudomonadati</taxon>
        <taxon>Pseudomonadota</taxon>
        <taxon>Alphaproteobacteria</taxon>
        <taxon>Hyphomicrobiales</taxon>
        <taxon>Nitrobacteraceae</taxon>
        <taxon>Bradyrhizobium</taxon>
    </lineage>
</organism>